<proteinExistence type="inferred from homology"/>
<accession>P0A5N5</accession>
<accession>A0A1R3Y169</accession>
<accession>Q57353</accession>
<accession>X2BL65</accession>
<organism>
    <name type="scientific">Mycobacterium bovis (strain ATCC BAA-935 / AF2122/97)</name>
    <dbReference type="NCBI Taxonomy" id="233413"/>
    <lineage>
        <taxon>Bacteria</taxon>
        <taxon>Bacillati</taxon>
        <taxon>Actinomycetota</taxon>
        <taxon>Actinomycetes</taxon>
        <taxon>Mycobacteriales</taxon>
        <taxon>Mycobacteriaceae</taxon>
        <taxon>Mycobacterium</taxon>
        <taxon>Mycobacterium tuberculosis complex</taxon>
    </lineage>
</organism>
<protein>
    <recommendedName>
        <fullName evidence="2">Alkyl hydroperoxide reductase AhpD</fullName>
        <ecNumber evidence="2">1.11.1.28</ecNumber>
    </recommendedName>
    <alternativeName>
        <fullName evidence="2">Alkylhydroperoxidase AhpD</fullName>
    </alternativeName>
</protein>
<feature type="chain" id="PRO_0000064505" description="Alkyl hydroperoxide reductase AhpD">
    <location>
        <begin position="1"/>
        <end position="177"/>
    </location>
</feature>
<feature type="active site" description="Proton donor" evidence="2">
    <location>
        <position position="130"/>
    </location>
</feature>
<feature type="active site" description="Cysteine sulfenic acid (-SOH) intermediate" evidence="2">
    <location>
        <position position="133"/>
    </location>
</feature>
<feature type="disulfide bond" evidence="1">
    <location>
        <begin position="130"/>
        <end position="133"/>
    </location>
</feature>
<feature type="disulfide bond" description="Interchain (with AhpC); in linked form" evidence="2">
    <location>
        <position position="133"/>
    </location>
</feature>
<name>AHPD_MYCBO</name>
<comment type="function">
    <text evidence="2">Antioxidant protein with alkyl hydroperoxidase activity. Required for the reduction of the AhpC active site cysteine residues and for the regeneration of the AhpC enzyme activity.</text>
</comment>
<comment type="catalytic activity">
    <reaction evidence="2">
        <text>N(6)-[(R)-dihydrolipoyl]-L-lysyl-[lipoyl-carrier protein] + a hydroperoxide = N(6)-[(R)-lipoyl]-L-lysyl-[lipoyl-carrier protein] + an alcohol + H2O</text>
        <dbReference type="Rhea" id="RHEA:62636"/>
        <dbReference type="Rhea" id="RHEA-COMP:10502"/>
        <dbReference type="Rhea" id="RHEA-COMP:16355"/>
        <dbReference type="ChEBI" id="CHEBI:15377"/>
        <dbReference type="ChEBI" id="CHEBI:30879"/>
        <dbReference type="ChEBI" id="CHEBI:35924"/>
        <dbReference type="ChEBI" id="CHEBI:83099"/>
        <dbReference type="ChEBI" id="CHEBI:83100"/>
        <dbReference type="EC" id="1.11.1.28"/>
    </reaction>
</comment>
<comment type="subunit">
    <text evidence="2">Homotrimer.</text>
</comment>
<comment type="similarity">
    <text evidence="2">Belongs to the AhpD family.</text>
</comment>
<reference key="1">
    <citation type="journal article" date="1996" name="Mol. Microbiol.">
        <title>ahpC, a gene involved in isoniazid resistance of the Mycobacterium tuberculosis complex.</title>
        <authorList>
            <person name="Wilson T.M."/>
            <person name="Collins D.M."/>
        </authorList>
    </citation>
    <scope>NUCLEOTIDE SEQUENCE [GENOMIC DNA]</scope>
    <source>
        <strain>ATCC 35723 / TMC 405</strain>
        <strain>ATCC 35729 / TMC 606</strain>
    </source>
</reference>
<reference key="2">
    <citation type="journal article" date="2003" name="Proc. Natl. Acad. Sci. U.S.A.">
        <title>The complete genome sequence of Mycobacterium bovis.</title>
        <authorList>
            <person name="Garnier T."/>
            <person name="Eiglmeier K."/>
            <person name="Camus J.-C."/>
            <person name="Medina N."/>
            <person name="Mansoor H."/>
            <person name="Pryor M."/>
            <person name="Duthoy S."/>
            <person name="Grondin S."/>
            <person name="Lacroix C."/>
            <person name="Monsempe C."/>
            <person name="Simon S."/>
            <person name="Harris B."/>
            <person name="Atkin R."/>
            <person name="Doggett J."/>
            <person name="Mayes R."/>
            <person name="Keating L."/>
            <person name="Wheeler P.R."/>
            <person name="Parkhill J."/>
            <person name="Barrell B.G."/>
            <person name="Cole S.T."/>
            <person name="Gordon S.V."/>
            <person name="Hewinson R.G."/>
        </authorList>
    </citation>
    <scope>NUCLEOTIDE SEQUENCE [LARGE SCALE GENOMIC DNA]</scope>
    <source>
        <strain>ATCC BAA-935 / AF2122/97</strain>
    </source>
</reference>
<reference key="3">
    <citation type="journal article" date="2017" name="Genome Announc.">
        <title>Updated reference genome sequence and annotation of Mycobacterium bovis AF2122/97.</title>
        <authorList>
            <person name="Malone K.M."/>
            <person name="Farrell D."/>
            <person name="Stuber T.P."/>
            <person name="Schubert O.T."/>
            <person name="Aebersold R."/>
            <person name="Robbe-Austerman S."/>
            <person name="Gordon S.V."/>
        </authorList>
    </citation>
    <scope>NUCLEOTIDE SEQUENCE [LARGE SCALE GENOMIC DNA]</scope>
    <scope>GENOME REANNOTATION</scope>
    <source>
        <strain>ATCC BAA-935 / AF2122/97</strain>
    </source>
</reference>
<keyword id="KW-0049">Antioxidant</keyword>
<keyword id="KW-1015">Disulfide bond</keyword>
<keyword id="KW-0560">Oxidoreductase</keyword>
<keyword id="KW-0575">Peroxidase</keyword>
<keyword id="KW-0676">Redox-active center</keyword>
<keyword id="KW-1185">Reference proteome</keyword>
<sequence length="177" mass="18781">MSIEKLKAALPEYAKDIKLNLSSITRSSVLDQEQLWGTLLASAAATRNPQVLADIGAEATDHLSAAARHAALGAAAIMGMNNVFYRGRGFLEGRYDDLRPGLRMNIIANPGIPKANFELWSFAVSAINGCSHCLVAHEHTLRTVGVDREAIFEALKAAAIVSGVAQALATIEALSPS</sequence>
<dbReference type="EC" id="1.11.1.28" evidence="2"/>
<dbReference type="EMBL" id="U24083">
    <property type="protein sequence ID" value="AAB60204.1"/>
    <property type="molecule type" value="Genomic_DNA"/>
</dbReference>
<dbReference type="EMBL" id="U24084">
    <property type="protein sequence ID" value="AAB38113.1"/>
    <property type="molecule type" value="Genomic_DNA"/>
</dbReference>
<dbReference type="EMBL" id="LT708304">
    <property type="protein sequence ID" value="SIU01070.1"/>
    <property type="molecule type" value="Genomic_DNA"/>
</dbReference>
<dbReference type="PIR" id="S71014">
    <property type="entry name" value="S71014"/>
</dbReference>
<dbReference type="RefSeq" id="NP_856102.1">
    <property type="nucleotide sequence ID" value="NC_002945.3"/>
</dbReference>
<dbReference type="RefSeq" id="WP_003412536.1">
    <property type="nucleotide sequence ID" value="NC_002945.4"/>
</dbReference>
<dbReference type="SMR" id="P0A5N5"/>
<dbReference type="PeroxiBase" id="4577">
    <property type="entry name" value="MboAhpD"/>
</dbReference>
<dbReference type="KEGG" id="mbo:BQ2027_MB2455"/>
<dbReference type="PATRIC" id="fig|233413.5.peg.2701"/>
<dbReference type="Proteomes" id="UP000001419">
    <property type="component" value="Chromosome"/>
</dbReference>
<dbReference type="GO" id="GO:0008785">
    <property type="term" value="F:alkyl hydroperoxide reductase activity"/>
    <property type="evidence" value="ECO:0007669"/>
    <property type="project" value="UniProtKB-UniRule"/>
</dbReference>
<dbReference type="GO" id="GO:0015036">
    <property type="term" value="F:disulfide oxidoreductase activity"/>
    <property type="evidence" value="ECO:0007669"/>
    <property type="project" value="TreeGrafter"/>
</dbReference>
<dbReference type="GO" id="GO:0032843">
    <property type="term" value="F:hydroperoxide reductase activity"/>
    <property type="evidence" value="ECO:0007669"/>
    <property type="project" value="InterPro"/>
</dbReference>
<dbReference type="GO" id="GO:0051920">
    <property type="term" value="F:peroxiredoxin activity"/>
    <property type="evidence" value="ECO:0007669"/>
    <property type="project" value="InterPro"/>
</dbReference>
<dbReference type="GO" id="GO:0045454">
    <property type="term" value="P:cell redox homeostasis"/>
    <property type="evidence" value="ECO:0007669"/>
    <property type="project" value="TreeGrafter"/>
</dbReference>
<dbReference type="GO" id="GO:0006979">
    <property type="term" value="P:response to oxidative stress"/>
    <property type="evidence" value="ECO:0007669"/>
    <property type="project" value="InterPro"/>
</dbReference>
<dbReference type="FunFam" id="1.20.1290.10:FF:000004">
    <property type="entry name" value="Alkyl hydroperoxide reductase AhpD"/>
    <property type="match status" value="1"/>
</dbReference>
<dbReference type="Gene3D" id="1.20.1290.10">
    <property type="entry name" value="AhpD-like"/>
    <property type="match status" value="1"/>
</dbReference>
<dbReference type="HAMAP" id="MF_01676">
    <property type="entry name" value="AhpD"/>
    <property type="match status" value="1"/>
</dbReference>
<dbReference type="InterPro" id="IPR004674">
    <property type="entry name" value="AhpD"/>
</dbReference>
<dbReference type="InterPro" id="IPR029032">
    <property type="entry name" value="AhpD-like"/>
</dbReference>
<dbReference type="InterPro" id="IPR004675">
    <property type="entry name" value="AhpD_core"/>
</dbReference>
<dbReference type="InterPro" id="IPR003779">
    <property type="entry name" value="CMD-like"/>
</dbReference>
<dbReference type="NCBIfam" id="TIGR00777">
    <property type="entry name" value="ahpD"/>
    <property type="match status" value="1"/>
</dbReference>
<dbReference type="NCBIfam" id="TIGR00778">
    <property type="entry name" value="ahpD_dom"/>
    <property type="match status" value="1"/>
</dbReference>
<dbReference type="PANTHER" id="PTHR33930">
    <property type="entry name" value="ALKYL HYDROPEROXIDE REDUCTASE AHPD"/>
    <property type="match status" value="1"/>
</dbReference>
<dbReference type="PANTHER" id="PTHR33930:SF7">
    <property type="entry name" value="ALKYL HYDROPEROXIDE REDUCTASE AHPD"/>
    <property type="match status" value="1"/>
</dbReference>
<dbReference type="Pfam" id="PF02627">
    <property type="entry name" value="CMD"/>
    <property type="match status" value="1"/>
</dbReference>
<dbReference type="SUPFAM" id="SSF69118">
    <property type="entry name" value="AhpD-like"/>
    <property type="match status" value="1"/>
</dbReference>
<gene>
    <name evidence="2" type="primary">ahpD</name>
    <name type="ordered locus">BQ2027_MB2455</name>
</gene>
<evidence type="ECO:0000250" key="1"/>
<evidence type="ECO:0000255" key="2">
    <source>
        <dbReference type="HAMAP-Rule" id="MF_01676"/>
    </source>
</evidence>